<evidence type="ECO:0000255" key="1">
    <source>
        <dbReference type="HAMAP-Rule" id="MF_00051"/>
    </source>
</evidence>
<reference key="1">
    <citation type="journal article" date="2001" name="Science">
        <title>Comparative genomics of Listeria species.</title>
        <authorList>
            <person name="Glaser P."/>
            <person name="Frangeul L."/>
            <person name="Buchrieser C."/>
            <person name="Rusniok C."/>
            <person name="Amend A."/>
            <person name="Baquero F."/>
            <person name="Berche P."/>
            <person name="Bloecker H."/>
            <person name="Brandt P."/>
            <person name="Chakraborty T."/>
            <person name="Charbit A."/>
            <person name="Chetouani F."/>
            <person name="Couve E."/>
            <person name="de Daruvar A."/>
            <person name="Dehoux P."/>
            <person name="Domann E."/>
            <person name="Dominguez-Bernal G."/>
            <person name="Duchaud E."/>
            <person name="Durant L."/>
            <person name="Dussurget O."/>
            <person name="Entian K.-D."/>
            <person name="Fsihi H."/>
            <person name="Garcia-del Portillo F."/>
            <person name="Garrido P."/>
            <person name="Gautier L."/>
            <person name="Goebel W."/>
            <person name="Gomez-Lopez N."/>
            <person name="Hain T."/>
            <person name="Hauf J."/>
            <person name="Jackson D."/>
            <person name="Jones L.-M."/>
            <person name="Kaerst U."/>
            <person name="Kreft J."/>
            <person name="Kuhn M."/>
            <person name="Kunst F."/>
            <person name="Kurapkat G."/>
            <person name="Madueno E."/>
            <person name="Maitournam A."/>
            <person name="Mata Vicente J."/>
            <person name="Ng E."/>
            <person name="Nedjari H."/>
            <person name="Nordsiek G."/>
            <person name="Novella S."/>
            <person name="de Pablos B."/>
            <person name="Perez-Diaz J.-C."/>
            <person name="Purcell R."/>
            <person name="Remmel B."/>
            <person name="Rose M."/>
            <person name="Schlueter T."/>
            <person name="Simoes N."/>
            <person name="Tierrez A."/>
            <person name="Vazquez-Boland J.-A."/>
            <person name="Voss H."/>
            <person name="Wehland J."/>
            <person name="Cossart P."/>
        </authorList>
    </citation>
    <scope>NUCLEOTIDE SEQUENCE [LARGE SCALE GENOMIC DNA]</scope>
    <source>
        <strain>ATCC BAA-679 / EGD-e</strain>
    </source>
</reference>
<proteinExistence type="inferred from homology"/>
<feature type="chain" id="PRO_0000113601" description="Serine hydroxymethyltransferase">
    <location>
        <begin position="1"/>
        <end position="413"/>
    </location>
</feature>
<feature type="binding site" evidence="1">
    <location>
        <position position="117"/>
    </location>
    <ligand>
        <name>(6S)-5,6,7,8-tetrahydrofolate</name>
        <dbReference type="ChEBI" id="CHEBI:57453"/>
    </ligand>
</feature>
<feature type="binding site" evidence="1">
    <location>
        <begin position="121"/>
        <end position="123"/>
    </location>
    <ligand>
        <name>(6S)-5,6,7,8-tetrahydrofolate</name>
        <dbReference type="ChEBI" id="CHEBI:57453"/>
    </ligand>
</feature>
<feature type="binding site" evidence="1">
    <location>
        <begin position="349"/>
        <end position="351"/>
    </location>
    <ligand>
        <name>(6S)-5,6,7,8-tetrahydrofolate</name>
        <dbReference type="ChEBI" id="CHEBI:57453"/>
    </ligand>
</feature>
<feature type="site" description="Plays an important role in substrate specificity" evidence="1">
    <location>
        <position position="225"/>
    </location>
</feature>
<feature type="modified residue" description="N6-(pyridoxal phosphate)lysine" evidence="1">
    <location>
        <position position="226"/>
    </location>
</feature>
<accession>Q8Y4B2</accession>
<comment type="function">
    <text evidence="1">Catalyzes the reversible interconversion of serine and glycine with tetrahydrofolate (THF) serving as the one-carbon carrier. This reaction serves as the major source of one-carbon groups required for the biosynthesis of purines, thymidylate, methionine, and other important biomolecules. Also exhibits THF-independent aldolase activity toward beta-hydroxyamino acids, producing glycine and aldehydes, via a retro-aldol mechanism.</text>
</comment>
<comment type="catalytic activity">
    <reaction evidence="1">
        <text>(6R)-5,10-methylene-5,6,7,8-tetrahydrofolate + glycine + H2O = (6S)-5,6,7,8-tetrahydrofolate + L-serine</text>
        <dbReference type="Rhea" id="RHEA:15481"/>
        <dbReference type="ChEBI" id="CHEBI:15377"/>
        <dbReference type="ChEBI" id="CHEBI:15636"/>
        <dbReference type="ChEBI" id="CHEBI:33384"/>
        <dbReference type="ChEBI" id="CHEBI:57305"/>
        <dbReference type="ChEBI" id="CHEBI:57453"/>
        <dbReference type="EC" id="2.1.2.1"/>
    </reaction>
</comment>
<comment type="cofactor">
    <cofactor evidence="1">
        <name>pyridoxal 5'-phosphate</name>
        <dbReference type="ChEBI" id="CHEBI:597326"/>
    </cofactor>
</comment>
<comment type="pathway">
    <text evidence="1">One-carbon metabolism; tetrahydrofolate interconversion.</text>
</comment>
<comment type="pathway">
    <text evidence="1">Amino-acid biosynthesis; glycine biosynthesis; glycine from L-serine: step 1/1.</text>
</comment>
<comment type="subunit">
    <text evidence="1">Homodimer.</text>
</comment>
<comment type="subcellular location">
    <subcellularLocation>
        <location evidence="1">Cytoplasm</location>
    </subcellularLocation>
</comment>
<comment type="similarity">
    <text evidence="1">Belongs to the SHMT family.</text>
</comment>
<name>GLYA_LISMO</name>
<keyword id="KW-0028">Amino-acid biosynthesis</keyword>
<keyword id="KW-0963">Cytoplasm</keyword>
<keyword id="KW-0554">One-carbon metabolism</keyword>
<keyword id="KW-0663">Pyridoxal phosphate</keyword>
<keyword id="KW-1185">Reference proteome</keyword>
<keyword id="KW-0808">Transferase</keyword>
<organism>
    <name type="scientific">Listeria monocytogenes serovar 1/2a (strain ATCC BAA-679 / EGD-e)</name>
    <dbReference type="NCBI Taxonomy" id="169963"/>
    <lineage>
        <taxon>Bacteria</taxon>
        <taxon>Bacillati</taxon>
        <taxon>Bacillota</taxon>
        <taxon>Bacilli</taxon>
        <taxon>Bacillales</taxon>
        <taxon>Listeriaceae</taxon>
        <taxon>Listeria</taxon>
    </lineage>
</organism>
<gene>
    <name evidence="1" type="primary">glyA</name>
    <name type="ordered locus">lmo2539</name>
</gene>
<sequence>MVYLQKQDKEVFDAIKLELGRQRANIELIASENFVSEQVMEAMGSVLTNKYAEGYPGKRYYGGCEFVDIVEDLARDRAKKLFGAEYANVQPHSGAQANMAVYHTVLEPGDTVLGMNLSHGGHLTHGSPVNFSGVLYNFVEYGVREDTKEIDYDIVREAALKHKPKMIVAGASAYPRKIDFAKFREIADEVGAYLMVDMAHIAGLVAAGLHQNPVPYADFTTTTTHKTLRGPRGGMILAKAEWEQKLNKSIFPGIQGGPLMHVIAAKAVAFGEALQPEFTTYCEQIIRNSKKLAETLQANDVAVLTGGSDNHLLLIDLKPLGLTGKAAEKVLDEVGITVNKNTIPFETESPFVTSGIRVGVAAVTTRGFDEVAIEKVGVLISEVLHNLENEEVLADVKARVATLTNEYPLYPSL</sequence>
<protein>
    <recommendedName>
        <fullName evidence="1">Serine hydroxymethyltransferase</fullName>
        <shortName evidence="1">SHMT</shortName>
        <shortName evidence="1">Serine methylase</shortName>
        <ecNumber evidence="1">2.1.2.1</ecNumber>
    </recommendedName>
</protein>
<dbReference type="EC" id="2.1.2.1" evidence="1"/>
<dbReference type="EMBL" id="AL591983">
    <property type="protein sequence ID" value="CAD00617.1"/>
    <property type="molecule type" value="Genomic_DNA"/>
</dbReference>
<dbReference type="PIR" id="AC1392">
    <property type="entry name" value="AC1392"/>
</dbReference>
<dbReference type="RefSeq" id="NP_466062.1">
    <property type="nucleotide sequence ID" value="NC_003210.1"/>
</dbReference>
<dbReference type="RefSeq" id="WP_003732521.1">
    <property type="nucleotide sequence ID" value="NZ_CP149495.1"/>
</dbReference>
<dbReference type="SMR" id="Q8Y4B2"/>
<dbReference type="STRING" id="169963.gene:17595250"/>
<dbReference type="PaxDb" id="169963-lmo2539"/>
<dbReference type="EnsemblBacteria" id="CAD00617">
    <property type="protein sequence ID" value="CAD00617"/>
    <property type="gene ID" value="CAD00617"/>
</dbReference>
<dbReference type="GeneID" id="93240408"/>
<dbReference type="GeneID" id="986768"/>
<dbReference type="KEGG" id="lmo:lmo2539"/>
<dbReference type="PATRIC" id="fig|169963.11.peg.2600"/>
<dbReference type="eggNOG" id="COG0112">
    <property type="taxonomic scope" value="Bacteria"/>
</dbReference>
<dbReference type="HOGENOM" id="CLU_022477_2_1_9"/>
<dbReference type="OrthoDB" id="9803846at2"/>
<dbReference type="PhylomeDB" id="Q8Y4B2"/>
<dbReference type="BioCyc" id="LMON169963:LMO2539-MONOMER"/>
<dbReference type="UniPathway" id="UPA00193"/>
<dbReference type="UniPathway" id="UPA00288">
    <property type="reaction ID" value="UER01023"/>
</dbReference>
<dbReference type="Proteomes" id="UP000000817">
    <property type="component" value="Chromosome"/>
</dbReference>
<dbReference type="GO" id="GO:0005737">
    <property type="term" value="C:cytoplasm"/>
    <property type="evidence" value="ECO:0000318"/>
    <property type="project" value="GO_Central"/>
</dbReference>
<dbReference type="GO" id="GO:0005829">
    <property type="term" value="C:cytosol"/>
    <property type="evidence" value="ECO:0000318"/>
    <property type="project" value="GO_Central"/>
</dbReference>
<dbReference type="GO" id="GO:0004372">
    <property type="term" value="F:glycine hydroxymethyltransferase activity"/>
    <property type="evidence" value="ECO:0000318"/>
    <property type="project" value="GO_Central"/>
</dbReference>
<dbReference type="GO" id="GO:0030170">
    <property type="term" value="F:pyridoxal phosphate binding"/>
    <property type="evidence" value="ECO:0000318"/>
    <property type="project" value="GO_Central"/>
</dbReference>
<dbReference type="GO" id="GO:0019264">
    <property type="term" value="P:glycine biosynthetic process from serine"/>
    <property type="evidence" value="ECO:0000318"/>
    <property type="project" value="GO_Central"/>
</dbReference>
<dbReference type="GO" id="GO:0035999">
    <property type="term" value="P:tetrahydrofolate interconversion"/>
    <property type="evidence" value="ECO:0007669"/>
    <property type="project" value="UniProtKB-UniRule"/>
</dbReference>
<dbReference type="GO" id="GO:0046653">
    <property type="term" value="P:tetrahydrofolate metabolic process"/>
    <property type="evidence" value="ECO:0000318"/>
    <property type="project" value="GO_Central"/>
</dbReference>
<dbReference type="CDD" id="cd00378">
    <property type="entry name" value="SHMT"/>
    <property type="match status" value="1"/>
</dbReference>
<dbReference type="FunFam" id="3.40.640.10:FF:000001">
    <property type="entry name" value="Serine hydroxymethyltransferase"/>
    <property type="match status" value="1"/>
</dbReference>
<dbReference type="FunFam" id="3.90.1150.10:FF:000003">
    <property type="entry name" value="Serine hydroxymethyltransferase"/>
    <property type="match status" value="1"/>
</dbReference>
<dbReference type="Gene3D" id="3.90.1150.10">
    <property type="entry name" value="Aspartate Aminotransferase, domain 1"/>
    <property type="match status" value="1"/>
</dbReference>
<dbReference type="Gene3D" id="3.40.640.10">
    <property type="entry name" value="Type I PLP-dependent aspartate aminotransferase-like (Major domain)"/>
    <property type="match status" value="1"/>
</dbReference>
<dbReference type="HAMAP" id="MF_00051">
    <property type="entry name" value="SHMT"/>
    <property type="match status" value="1"/>
</dbReference>
<dbReference type="InterPro" id="IPR015424">
    <property type="entry name" value="PyrdxlP-dep_Trfase"/>
</dbReference>
<dbReference type="InterPro" id="IPR015421">
    <property type="entry name" value="PyrdxlP-dep_Trfase_major"/>
</dbReference>
<dbReference type="InterPro" id="IPR015422">
    <property type="entry name" value="PyrdxlP-dep_Trfase_small"/>
</dbReference>
<dbReference type="InterPro" id="IPR001085">
    <property type="entry name" value="Ser_HO-MeTrfase"/>
</dbReference>
<dbReference type="InterPro" id="IPR049943">
    <property type="entry name" value="Ser_HO-MeTrfase-like"/>
</dbReference>
<dbReference type="InterPro" id="IPR019798">
    <property type="entry name" value="Ser_HO-MeTrfase_PLP_BS"/>
</dbReference>
<dbReference type="InterPro" id="IPR039429">
    <property type="entry name" value="SHMT-like_dom"/>
</dbReference>
<dbReference type="NCBIfam" id="NF000586">
    <property type="entry name" value="PRK00011.1"/>
    <property type="match status" value="1"/>
</dbReference>
<dbReference type="PANTHER" id="PTHR11680">
    <property type="entry name" value="SERINE HYDROXYMETHYLTRANSFERASE"/>
    <property type="match status" value="1"/>
</dbReference>
<dbReference type="PANTHER" id="PTHR11680:SF35">
    <property type="entry name" value="SERINE HYDROXYMETHYLTRANSFERASE 1"/>
    <property type="match status" value="1"/>
</dbReference>
<dbReference type="Pfam" id="PF00464">
    <property type="entry name" value="SHMT"/>
    <property type="match status" value="1"/>
</dbReference>
<dbReference type="PIRSF" id="PIRSF000412">
    <property type="entry name" value="SHMT"/>
    <property type="match status" value="1"/>
</dbReference>
<dbReference type="SUPFAM" id="SSF53383">
    <property type="entry name" value="PLP-dependent transferases"/>
    <property type="match status" value="1"/>
</dbReference>
<dbReference type="PROSITE" id="PS00096">
    <property type="entry name" value="SHMT"/>
    <property type="match status" value="1"/>
</dbReference>